<feature type="initiator methionine" description="Removed" evidence="3">
    <location>
        <position position="1"/>
    </location>
</feature>
<feature type="chain" id="PRO_0000191453" description="Sperm protamine P1">
    <location>
        <begin position="2"/>
        <end position="51"/>
    </location>
</feature>
<feature type="disulfide bond" description="Interchain (with C-23)" evidence="2">
    <location>
        <position position="6"/>
    </location>
</feature>
<feature type="disulfide bond" evidence="2">
    <location>
        <begin position="7"/>
        <end position="15"/>
    </location>
</feature>
<feature type="disulfide bond" description="Interchain (with C-6)" evidence="2">
    <location>
        <position position="23"/>
    </location>
</feature>
<feature type="disulfide bond" description="Interchain (with C-39)" evidence="2">
    <location>
        <position position="39"/>
    </location>
</feature>
<feature type="disulfide bond" evidence="2">
    <location>
        <begin position="40"/>
        <end position="48"/>
    </location>
</feature>
<comment type="function">
    <text>Protamines substitute for histones in the chromatin of sperm during the haploid phase of spermatogenesis. They compact sperm DNA into a highly condensed, stable and inactive complex.</text>
</comment>
<comment type="subunit">
    <text evidence="1">Cross-linked by interchain disulfide bonds around the DNA-helix.</text>
</comment>
<comment type="subcellular location">
    <subcellularLocation>
        <location>Nucleus</location>
    </subcellularLocation>
    <subcellularLocation>
        <location>Chromosome</location>
    </subcellularLocation>
</comment>
<comment type="tissue specificity">
    <text>Testis.</text>
</comment>
<comment type="similarity">
    <text evidence="4">Belongs to the protamine P1 family.</text>
</comment>
<reference key="1">
    <citation type="journal article" date="1988" name="FEBS Lett.">
        <title>Primary structure of rabbit sperm protamine, the first protamine of its type with an aberrant N-terminal.</title>
        <authorList>
            <person name="Ammer H."/>
            <person name="Henschen A."/>
        </authorList>
    </citation>
    <scope>PROTEIN SEQUENCE OF 2-51</scope>
</reference>
<proteinExistence type="evidence at protein level"/>
<sequence>MARYRCCLTHSRSRCRRRRRRRCRRRRRRFGRRRRRRVCCRRYTVVRCTRQ</sequence>
<dbReference type="Ensembl" id="ENSCHIT00010042443.1">
    <property type="protein sequence ID" value="ENSCHIP00010030111.1"/>
    <property type="gene ID" value="ENSCHIG00010022404.1"/>
</dbReference>
<dbReference type="Ensembl" id="ENSCHIT00020035285">
    <property type="protein sequence ID" value="ENSCHIP00020026238"/>
    <property type="gene ID" value="ENSCHIG00020017012"/>
</dbReference>
<dbReference type="Ensembl" id="ENSCHIT00040043941">
    <property type="protein sequence ID" value="ENSCHIP00040035799"/>
    <property type="gene ID" value="ENSCHIG00040020181"/>
</dbReference>
<dbReference type="Proteomes" id="UP000291000">
    <property type="component" value="Unplaced"/>
</dbReference>
<dbReference type="Proteomes" id="UP000694566">
    <property type="component" value="Chromosome 25"/>
</dbReference>
<dbReference type="GO" id="GO:0000786">
    <property type="term" value="C:nucleosome"/>
    <property type="evidence" value="ECO:0007669"/>
    <property type="project" value="UniProtKB-KW"/>
</dbReference>
<dbReference type="GO" id="GO:0005634">
    <property type="term" value="C:nucleus"/>
    <property type="evidence" value="ECO:0007669"/>
    <property type="project" value="UniProtKB-SubCell"/>
</dbReference>
<dbReference type="GO" id="GO:0003677">
    <property type="term" value="F:DNA binding"/>
    <property type="evidence" value="ECO:0007669"/>
    <property type="project" value="UniProtKB-KW"/>
</dbReference>
<dbReference type="GO" id="GO:0030261">
    <property type="term" value="P:chromosome condensation"/>
    <property type="evidence" value="ECO:0007669"/>
    <property type="project" value="UniProtKB-KW"/>
</dbReference>
<dbReference type="GO" id="GO:0035092">
    <property type="term" value="P:sperm DNA condensation"/>
    <property type="evidence" value="ECO:0007669"/>
    <property type="project" value="InterPro"/>
</dbReference>
<dbReference type="InterPro" id="IPR000221">
    <property type="entry name" value="Protamine_P1"/>
</dbReference>
<dbReference type="Pfam" id="PF00260">
    <property type="entry name" value="Protamine_P1"/>
    <property type="match status" value="1"/>
</dbReference>
<dbReference type="PROSITE" id="PS00048">
    <property type="entry name" value="PROTAMINE_P1"/>
    <property type="match status" value="1"/>
</dbReference>
<organism>
    <name type="scientific">Capra hircus</name>
    <name type="common">Goat</name>
    <dbReference type="NCBI Taxonomy" id="9925"/>
    <lineage>
        <taxon>Eukaryota</taxon>
        <taxon>Metazoa</taxon>
        <taxon>Chordata</taxon>
        <taxon>Craniata</taxon>
        <taxon>Vertebrata</taxon>
        <taxon>Euteleostomi</taxon>
        <taxon>Mammalia</taxon>
        <taxon>Eutheria</taxon>
        <taxon>Laurasiatheria</taxon>
        <taxon>Artiodactyla</taxon>
        <taxon>Ruminantia</taxon>
        <taxon>Pecora</taxon>
        <taxon>Bovidae</taxon>
        <taxon>Caprinae</taxon>
        <taxon>Capra</taxon>
    </lineage>
</organism>
<protein>
    <recommendedName>
        <fullName>Sperm protamine P1</fullName>
    </recommendedName>
    <alternativeName>
        <fullName>Cysteine-rich protamine</fullName>
    </alternativeName>
</protein>
<evidence type="ECO:0000250" key="1"/>
<evidence type="ECO:0000250" key="2">
    <source>
        <dbReference type="UniProtKB" id="P02318"/>
    </source>
</evidence>
<evidence type="ECO:0000269" key="3">
    <source>
    </source>
</evidence>
<evidence type="ECO:0000305" key="4"/>
<gene>
    <name type="primary">PRM1</name>
    <name type="synonym">PRM-1</name>
</gene>
<name>HSP1_CAPHI</name>
<accession>P67833</accession>
<accession>P04102</accession>
<keyword id="KW-0158">Chromosome</keyword>
<keyword id="KW-0217">Developmental protein</keyword>
<keyword id="KW-0221">Differentiation</keyword>
<keyword id="KW-0903">Direct protein sequencing</keyword>
<keyword id="KW-1015">Disulfide bond</keyword>
<keyword id="KW-0226">DNA condensation</keyword>
<keyword id="KW-0238">DNA-binding</keyword>
<keyword id="KW-0544">Nucleosome core</keyword>
<keyword id="KW-0539">Nucleus</keyword>
<keyword id="KW-1185">Reference proteome</keyword>
<keyword id="KW-0744">Spermatogenesis</keyword>